<reference key="1">
    <citation type="submission" date="2007-03" db="EMBL/GenBank/DDBJ databases">
        <authorList>
            <consortium name="NIH - Xenopus Gene Collection (XGC) project"/>
        </authorList>
    </citation>
    <scope>NUCLEOTIDE SEQUENCE [LARGE SCALE MRNA]</scope>
    <source>
        <tissue>Brain</tissue>
    </source>
</reference>
<sequence>MRLRNGTVATALVFITTFLSLSWYTAWQNGKEKLMAYQREFHALKERLRIAEHRTLQRSSELHAILDHFRRMIKEANGSRDALNHFSDETQKLIKDLTNRKALQVPNIYYHMPHLLNHDGSLQPAVQVGLGRTGVSVVMGIPTVKRRVKSYLKETLHSLIDKLSPEEKLDCVIIVFVGETDLEYVNSVVASLQKEFATEISSGLVEVISPPATYYPDLNNLKETFGDSKERVRWRTKQNLDYCFLMMYAQRKGIYYIQLEDDIVAKQNYFSTIKNFALQLSSEDWMILEFSQLGFIGKMFQAPDITLIVEFILMFYKEKPIDWLLDHILWVKVCNPEKDAKHCDRQKSNLRIRFRPSLFQHVGLHSSLAGKIQKLTDKDFLKPLLHKIHVNPPAEVSTSLKVYQGHTLEKTYLGEDFFWAITPVAGDYILFKFDKPVNVERYLFRSGNPEHPGDQLWNTTVEVLPYRKDIVELRSDTKDKRLSDGFFRIGKFEDGLAEGPVNSYLNPISALRLSVLQNSAVWVILNEIHIKRNPAD</sequence>
<comment type="function">
    <text evidence="1 2">Glycosyltransferase that catalyze the transfer of GlcNAc from UDP-GlcNAc to the GlcNAcbeta1-2Manalpha1-3 arm of the core structure of N-linked glycans through a beta1-4 linkage and participates in the production of tri- and tetra-antennary N-linked sugar chains (By similarity). Involved in glucose transport by mediating SLC2A2/GLUT2 glycosylation, thereby controlling cell-surface expression of SLC2A2 in pancreatic beta cells (By similarity).</text>
</comment>
<comment type="catalytic activity">
    <reaction evidence="4">
        <text>N(4)-{beta-D-GlcNAc-(1-&gt;2)-alpha-D-Man-(1-&gt;3)-[beta-D-GlcNAc-(1-&gt;2)-alpha-D-Man-(1-&gt;6)]-beta-D-Man-(1-&gt;4)-beta-D-GlcNAc-(1-&gt;4)-beta-D-GlcNAc}-L-asparaginyl-[protein] + UDP-N-acetyl-alpha-D-glucosamine = N(4)-{beta-D-GlcNAc-(1-&gt;2)-[beta-D-GlcNAc-(1-&gt;4)]-alpha-D-Man-(1-&gt;3)-[beta-D-GlcNAc-(1-&gt;2)-alpha-D-Man-(1-&gt;6)]-beta-D-Man-(1-&gt;4)-beta-D-GlcNAc-(1-&gt;4)-beta-D-GlcNAc}-L-asparaginyl-[protein] + UDP + H(+)</text>
        <dbReference type="Rhea" id="RHEA:16057"/>
        <dbReference type="Rhea" id="RHEA-COMP:13526"/>
        <dbReference type="Rhea" id="RHEA-COMP:14374"/>
        <dbReference type="ChEBI" id="CHEBI:15378"/>
        <dbReference type="ChEBI" id="CHEBI:57705"/>
        <dbReference type="ChEBI" id="CHEBI:58223"/>
        <dbReference type="ChEBI" id="CHEBI:60651"/>
        <dbReference type="ChEBI" id="CHEBI:139507"/>
        <dbReference type="EC" id="2.4.1.145"/>
    </reaction>
    <physiologicalReaction direction="left-to-right" evidence="4">
        <dbReference type="Rhea" id="RHEA:16058"/>
    </physiologicalReaction>
</comment>
<comment type="catalytic activity">
    <reaction evidence="4">
        <text>an N(4)-{beta-D-GlcNAc-(1-&gt;2)-alpha-D-Man-(1-&gt;3)-[alpha-D-Man-(1-&gt;6)]-beta-D-Man-(1-&gt;4)-beta-D-GlcNAc-(1-&gt;4)-beta-D-GlcNAc}-L-asparaginyl-[protein] + UDP-N-acetyl-alpha-D-glucosamine = an N(4)-{beta-D-GlcNAc-(1-&gt;2)-[beta-D-GlcNAc-(1-&gt;4)]-alpha-D-Man-(1-&gt;3)-[alpha-D-Man-(1-&gt;6)]-beta-D-Man-(1-&gt;4)-beta-D-GlcNAc-(1-&gt;4)-beta-D-GlcNAc}-L-asparaginyl-[protein] + UDP + H(+)</text>
        <dbReference type="Rhea" id="RHEA:69615"/>
        <dbReference type="Rhea" id="RHEA-COMP:14369"/>
        <dbReference type="Rhea" id="RHEA-COMP:17732"/>
        <dbReference type="ChEBI" id="CHEBI:15378"/>
        <dbReference type="ChEBI" id="CHEBI:57705"/>
        <dbReference type="ChEBI" id="CHEBI:58223"/>
        <dbReference type="ChEBI" id="CHEBI:60615"/>
        <dbReference type="ChEBI" id="CHEBI:187873"/>
    </reaction>
    <physiologicalReaction direction="left-to-right" evidence="4">
        <dbReference type="Rhea" id="RHEA:69616"/>
    </physiologicalReaction>
</comment>
<comment type="catalytic activity">
    <reaction evidence="4">
        <text>an N(4)-{beta-D-GlcNAc-(1-&gt;2)-alpha-D-Man-(1-&gt;3)-[beta-D-GlcNAc-(1-&gt;2)-[beta-D-GlcNAc-(1-&gt;6)]-alpha-D-Man-(1-&gt;6)]-beta-D-Man-(1-&gt;4)-beta-D-GlcNAc-(1-&gt;4)-beta-D-GlcNAc}-L-asparaginyl-[protein] + UDP-N-acetyl-alpha-D-glucosamine = an N(4)-{beta-D-GlcNAc-(1-&gt;2)-[beta-D-GlcNAc-(1-&gt;4)]-alpha-D-Man-(1-&gt;3)-[beta-D-GlcNAc-(1-&gt;2)-[beta-D-GlcNAc-(1-&gt;6)]-alpha-D-Man-(1-&gt;6)]-beta-D-Man-(1-&gt;4)-beta-D-GlcNAc-(1-&gt;4)-beta-D-GlcNAc}-L-asparaginyl-[protein] + UDP + H(+)</text>
        <dbReference type="Rhea" id="RHEA:69619"/>
        <dbReference type="Rhea" id="RHEA-COMP:17733"/>
        <dbReference type="Rhea" id="RHEA-COMP:17734"/>
        <dbReference type="ChEBI" id="CHEBI:15378"/>
        <dbReference type="ChEBI" id="CHEBI:57705"/>
        <dbReference type="ChEBI" id="CHEBI:58223"/>
        <dbReference type="ChEBI" id="CHEBI:187874"/>
        <dbReference type="ChEBI" id="CHEBI:187875"/>
    </reaction>
    <physiologicalReaction direction="left-to-right" evidence="4">
        <dbReference type="Rhea" id="RHEA:69620"/>
    </physiologicalReaction>
</comment>
<comment type="catalytic activity">
    <reaction evidence="4">
        <text>an N(4)-{beta-D-GlcNAc-(1-&gt;2)-alpha-D-Man-(1-&gt;3)-[beta-D-GlcNAc-(1-&gt;2)-alpha-D-Man-(1-&gt;6)]-beta-D-Man-(1-&gt;4)-beta-D-GlcNAc-(1-&gt;4)-[alpha-L-Fuc-(1-&gt;6)]-beta-D-GlcNAc}-L-asparaginyl-[protein] + UDP-N-acetyl-alpha-D-glucosamine = N(4)-{beta-D-GlcNAc-(1-&gt;2)-[beta-D-GlcNAc-(1-&gt;4)]-alpha-D-Man-(1-&gt;3)-[beta-D-GlcNAc-(1-&gt;2)-alpha-D-Man-(1-&gt;6)]-beta-D-Man-(1-&gt;4)-beta-D-GlcNAc-(1-&gt;4)-[alpha-L-Fuc-(1-&gt;6)]-beta-D-GlcNAc}-asparaginyl-[protein] + UDP + H(+)</text>
        <dbReference type="Rhea" id="RHEA:69623"/>
        <dbReference type="Rhea" id="RHEA-COMP:13532"/>
        <dbReference type="Rhea" id="RHEA-COMP:18198"/>
        <dbReference type="ChEBI" id="CHEBI:15378"/>
        <dbReference type="ChEBI" id="CHEBI:57705"/>
        <dbReference type="ChEBI" id="CHEBI:58223"/>
        <dbReference type="ChEBI" id="CHEBI:137207"/>
        <dbReference type="ChEBI" id="CHEBI:187877"/>
    </reaction>
    <physiologicalReaction direction="left-to-right" evidence="4">
        <dbReference type="Rhea" id="RHEA:69624"/>
    </physiologicalReaction>
</comment>
<comment type="catalytic activity">
    <reaction evidence="4">
        <text>an N(4)-{beta-D-GlcNAc-(1-&gt;2)-alpha-D-Man-(1-&gt;3)-[beta-D-Gal-(1-&gt;4)-beta-D-GlcNAc-(1-&gt;2)-alpha-D-Man-(1-&gt;6)]-beta-D-Man-(1-&gt;4)-beta-D-GlcNAc-(1-&gt;4)-beta-D-GlcNAc}-L-asparaginyl-[protein] + UDP-N-acetyl-alpha-D-glucosamine = an N(4)-{beta-D-GlcNAc-(1-&gt;2)-[beta-D-GlcNAc-(1-&gt;4)]-alpha-D-Man-(1-&gt;3)-[beta-D-Gal-(1-&gt;4)-beta-D-GlcNAc-(1-&gt;2)-alpha-D-Man-(1-&gt;6)]-beta-D-Man-(1-&gt;4)-beta-D-GlcNAc-(1-&gt;4)-beta-D-GlcNAc}-L-asparaginyl-[protein] + UDP + H(+)</text>
        <dbReference type="Rhea" id="RHEA:69627"/>
        <dbReference type="Rhea" id="RHEA-COMP:17737"/>
        <dbReference type="Rhea" id="RHEA-COMP:17738"/>
        <dbReference type="ChEBI" id="CHEBI:15378"/>
        <dbReference type="ChEBI" id="CHEBI:57705"/>
        <dbReference type="ChEBI" id="CHEBI:58223"/>
        <dbReference type="ChEBI" id="CHEBI:187878"/>
        <dbReference type="ChEBI" id="CHEBI:187879"/>
    </reaction>
    <physiologicalReaction direction="left-to-right" evidence="4">
        <dbReference type="Rhea" id="RHEA:69628"/>
    </physiologicalReaction>
</comment>
<comment type="catalytic activity">
    <reaction evidence="4">
        <text>N(4)-{beta-D-GlcNAc-(1-&gt;2)-alpha-D-Man-(1-&gt;3)-[alpha-D-Man-(1-&gt;3)-{alpha-D-Man-(1-&gt;6)}-alpha-D-Man-(1-&gt;6)]-beta-D-Man-(1-&gt;4)-beta-D-GlcNAc-(1-&gt;4)-beta-D-GlcNAc}-asparaginyl-[protein] + UDP-N-acetyl-alpha-D-glucosamine = N(4)-{beta-D-GlcNAc-(1-&gt;2)-[beta-D-GlcNAc-(1-&gt;4)]-alpha-D-Man-(1-&gt;3)-[alpha-D-Man-(1-&gt;3)-{alpha-D-Man-(1-&gt;6)}-alpha-D-Man-(1-&gt;6)]-beta-D-Man-(1-&gt;4)-beta-D-GlcNAc-(1-&gt;4)-beta-D-GlcNAc}-asparaginyl-[protein] + UDP + H(+)</text>
        <dbReference type="Rhea" id="RHEA:69631"/>
        <dbReference type="Rhea" id="RHEA-COMP:17739"/>
        <dbReference type="Rhea" id="RHEA-COMP:17740"/>
        <dbReference type="ChEBI" id="CHEBI:15378"/>
        <dbReference type="ChEBI" id="CHEBI:57705"/>
        <dbReference type="ChEBI" id="CHEBI:58223"/>
        <dbReference type="ChEBI" id="CHEBI:187880"/>
        <dbReference type="ChEBI" id="CHEBI:187881"/>
    </reaction>
    <physiologicalReaction direction="left-to-right" evidence="4">
        <dbReference type="Rhea" id="RHEA:69632"/>
    </physiologicalReaction>
</comment>
<comment type="catalytic activity">
    <reaction evidence="4">
        <text>N(4)-{beta-D-GlcNAc-(1-&gt;2)-alpha-D-Man-(1-&gt;3)-beta-D-Man-(1-&gt;4)-beta-D-GlcNAc-(1-&gt;4)-beta-D-GlcNAc}-asparaginyl-[protein] + UDP-N-acetyl-alpha-D-glucosamine = N(4)-{beta-D-GlcNAc-(1-&gt;2)-[beta-D-GlcNAc-(1-&gt;4)]-alpha-D-Man-(1-&gt;3)-beta-D-Man-(1-&gt;4)-beta-D-GlcNAc-(1-&gt;4)-beta-D-GlcNAc}-asparaginyl-[protein] + UDP + H(+)</text>
        <dbReference type="Rhea" id="RHEA:69635"/>
        <dbReference type="Rhea" id="RHEA-COMP:17741"/>
        <dbReference type="Rhea" id="RHEA-COMP:17742"/>
        <dbReference type="ChEBI" id="CHEBI:15378"/>
        <dbReference type="ChEBI" id="CHEBI:57705"/>
        <dbReference type="ChEBI" id="CHEBI:58223"/>
        <dbReference type="ChEBI" id="CHEBI:187882"/>
        <dbReference type="ChEBI" id="CHEBI:187883"/>
    </reaction>
    <physiologicalReaction direction="left-to-right" evidence="4">
        <dbReference type="Rhea" id="RHEA:69636"/>
    </physiologicalReaction>
</comment>
<comment type="cofactor">
    <cofactor evidence="1">
        <name>a divalent metal cation</name>
        <dbReference type="ChEBI" id="CHEBI:60240"/>
    </cofactor>
</comment>
<comment type="activity regulation">
    <text evidence="1">Inhibited by UDP.</text>
</comment>
<comment type="pathway">
    <text evidence="1">Protein modification; protein glycosylation.</text>
</comment>
<comment type="subcellular location">
    <subcellularLocation>
        <location evidence="3">Golgi apparatus membrane</location>
        <topology evidence="3">Single-pass type II membrane protein</topology>
    </subcellularLocation>
</comment>
<comment type="subcellular location">
    <molecule>Alpha-1,3-mannosyl-glycoprotein 4-beta-N-acetylglucosaminyltransferase A soluble form</molecule>
    <subcellularLocation>
        <location evidence="1">Secreted</location>
    </subcellularLocation>
</comment>
<comment type="PTM">
    <text evidence="1">N-glycosylated.</text>
</comment>
<comment type="similarity">
    <text evidence="6">Belongs to the glycosyltransferase 54 family.</text>
</comment>
<protein>
    <recommendedName>
        <fullName evidence="4">Alpha-1,3-mannosyl-glycoprotein 4-beta-N-acetylglucosaminyltransferase A</fullName>
        <ecNumber evidence="1">2.4.1.145</ecNumber>
    </recommendedName>
    <alternativeName>
        <fullName>N-glycosyl-oligosaccharide-glycoprotein N-acetylglucosaminyltransferase IVa</fullName>
        <shortName>GlcNAc-T IVa</shortName>
        <shortName>GnT-IVa</shortName>
        <shortName>N-acetylglucosaminyltransferase IVa</shortName>
    </alternativeName>
    <alternativeName>
        <fullName>UDP-N-acetylglucosamine: alpha-1,3-D-mannoside beta-1,4-N-acetylglucosaminyltransferase IVa</fullName>
    </alternativeName>
    <component>
        <recommendedName>
            <fullName>Alpha-1,3-mannosyl-glycoprotein 4-beta-N-acetylglucosaminyltransferase A soluble form</fullName>
        </recommendedName>
    </component>
</protein>
<keyword id="KW-0175">Coiled coil</keyword>
<keyword id="KW-0325">Glycoprotein</keyword>
<keyword id="KW-0328">Glycosyltransferase</keyword>
<keyword id="KW-0333">Golgi apparatus</keyword>
<keyword id="KW-0472">Membrane</keyword>
<keyword id="KW-0479">Metal-binding</keyword>
<keyword id="KW-1185">Reference proteome</keyword>
<keyword id="KW-0964">Secreted</keyword>
<keyword id="KW-0735">Signal-anchor</keyword>
<keyword id="KW-0808">Transferase</keyword>
<keyword id="KW-0812">Transmembrane</keyword>
<keyword id="KW-1133">Transmembrane helix</keyword>
<proteinExistence type="evidence at transcript level"/>
<accession>A4IID1</accession>
<dbReference type="EC" id="2.4.1.145" evidence="1"/>
<dbReference type="EMBL" id="BC135969">
    <property type="protein sequence ID" value="AAI35970.1"/>
    <property type="molecule type" value="mRNA"/>
</dbReference>
<dbReference type="RefSeq" id="NP_001096384.1">
    <property type="nucleotide sequence ID" value="NM_001102914.1"/>
</dbReference>
<dbReference type="SMR" id="A4IID1"/>
<dbReference type="FunCoup" id="A4IID1">
    <property type="interactions" value="1288"/>
</dbReference>
<dbReference type="STRING" id="8364.ENSXETP00000046882"/>
<dbReference type="CAZy" id="GT54">
    <property type="family name" value="Glycosyltransferase Family 54"/>
</dbReference>
<dbReference type="GlyCosmos" id="A4IID1">
    <property type="glycosylation" value="2 sites, No reported glycans"/>
</dbReference>
<dbReference type="PaxDb" id="8364-ENSXETP00000042031"/>
<dbReference type="GeneID" id="100124983"/>
<dbReference type="KEGG" id="xtr:100124983"/>
<dbReference type="AGR" id="Xenbase:XB-GENE-968212"/>
<dbReference type="CTD" id="11320"/>
<dbReference type="Xenbase" id="XB-GENE-968212">
    <property type="gene designation" value="mgat4a"/>
</dbReference>
<dbReference type="eggNOG" id="ENOG502QPQJ">
    <property type="taxonomic scope" value="Eukaryota"/>
</dbReference>
<dbReference type="InParanoid" id="A4IID1"/>
<dbReference type="OMA" id="QFAHINP"/>
<dbReference type="OrthoDB" id="2016523at2759"/>
<dbReference type="Reactome" id="R-XTR-381426">
    <property type="pathway name" value="Regulation of Insulin-like Growth Factor (IGF) transport and uptake by Insulin-like Growth Factor Binding Proteins (IGFBPs)"/>
</dbReference>
<dbReference type="Reactome" id="R-XTR-8957275">
    <property type="pathway name" value="Post-translational protein phosphorylation"/>
</dbReference>
<dbReference type="Reactome" id="R-XTR-975577">
    <property type="pathway name" value="N-Glycan antennae elongation"/>
</dbReference>
<dbReference type="UniPathway" id="UPA00378"/>
<dbReference type="Proteomes" id="UP000008143">
    <property type="component" value="Chromosome 2"/>
</dbReference>
<dbReference type="GO" id="GO:0005576">
    <property type="term" value="C:extracellular region"/>
    <property type="evidence" value="ECO:0007669"/>
    <property type="project" value="UniProtKB-SubCell"/>
</dbReference>
<dbReference type="GO" id="GO:0000139">
    <property type="term" value="C:Golgi membrane"/>
    <property type="evidence" value="ECO:0007669"/>
    <property type="project" value="UniProtKB-SubCell"/>
</dbReference>
<dbReference type="GO" id="GO:0005777">
    <property type="term" value="C:peroxisome"/>
    <property type="evidence" value="ECO:0000250"/>
    <property type="project" value="UniProtKB"/>
</dbReference>
<dbReference type="GO" id="GO:0008453">
    <property type="term" value="F:alanine-glyoxylate transaminase activity"/>
    <property type="evidence" value="ECO:0000250"/>
    <property type="project" value="UniProtKB"/>
</dbReference>
<dbReference type="GO" id="GO:0008454">
    <property type="term" value="F:alpha-1,3-mannosylglycoprotein 4-beta-N-acetylglucosaminyltransferase activity"/>
    <property type="evidence" value="ECO:0000250"/>
    <property type="project" value="UniProtKB"/>
</dbReference>
<dbReference type="GO" id="GO:0046872">
    <property type="term" value="F:metal ion binding"/>
    <property type="evidence" value="ECO:0007669"/>
    <property type="project" value="UniProtKB-KW"/>
</dbReference>
<dbReference type="GO" id="GO:0042803">
    <property type="term" value="F:protein homodimerization activity"/>
    <property type="evidence" value="ECO:0000250"/>
    <property type="project" value="UniProtKB"/>
</dbReference>
<dbReference type="GO" id="GO:0046487">
    <property type="term" value="P:glyoxylate metabolic process"/>
    <property type="evidence" value="ECO:0000250"/>
    <property type="project" value="UniProtKB"/>
</dbReference>
<dbReference type="GO" id="GO:0006491">
    <property type="term" value="P:N-glycan processing"/>
    <property type="evidence" value="ECO:0000250"/>
    <property type="project" value="UniProtKB"/>
</dbReference>
<dbReference type="GO" id="GO:0006486">
    <property type="term" value="P:protein glycosylation"/>
    <property type="evidence" value="ECO:0007669"/>
    <property type="project" value="UniProtKB-UniPathway"/>
</dbReference>
<dbReference type="InterPro" id="IPR006759">
    <property type="entry name" value="Glyco_transf_54"/>
</dbReference>
<dbReference type="InterPro" id="IPR056576">
    <property type="entry name" value="MGAT4_A/B/C_C"/>
</dbReference>
<dbReference type="PANTHER" id="PTHR12062:SF4">
    <property type="entry name" value="ALPHA-1,3-MANNOSYL-GLYCOPROTEIN 4-BETA-N-ACETYLGLUCOSAMINYLTRANSFERASE A"/>
    <property type="match status" value="1"/>
</dbReference>
<dbReference type="PANTHER" id="PTHR12062">
    <property type="entry name" value="N-ACETYLGLUCOSAMINYLTRANSFERASE VI"/>
    <property type="match status" value="1"/>
</dbReference>
<dbReference type="Pfam" id="PF04666">
    <property type="entry name" value="MGAT4_cons"/>
    <property type="match status" value="1"/>
</dbReference>
<dbReference type="Pfam" id="PF23524">
    <property type="entry name" value="MGAT4A_C"/>
    <property type="match status" value="1"/>
</dbReference>
<name>MGT4A_XENTR</name>
<evidence type="ECO:0000250" key="1">
    <source>
        <dbReference type="UniProtKB" id="O77836"/>
    </source>
</evidence>
<evidence type="ECO:0000250" key="2">
    <source>
        <dbReference type="UniProtKB" id="Q812G0"/>
    </source>
</evidence>
<evidence type="ECO:0000250" key="3">
    <source>
        <dbReference type="UniProtKB" id="Q9D4R2"/>
    </source>
</evidence>
<evidence type="ECO:0000250" key="4">
    <source>
        <dbReference type="UniProtKB" id="Q9UM21"/>
    </source>
</evidence>
<evidence type="ECO:0000255" key="5"/>
<evidence type="ECO:0000305" key="6"/>
<gene>
    <name evidence="4" type="primary">mgat4a</name>
</gene>
<organism>
    <name type="scientific">Xenopus tropicalis</name>
    <name type="common">Western clawed frog</name>
    <name type="synonym">Silurana tropicalis</name>
    <dbReference type="NCBI Taxonomy" id="8364"/>
    <lineage>
        <taxon>Eukaryota</taxon>
        <taxon>Metazoa</taxon>
        <taxon>Chordata</taxon>
        <taxon>Craniata</taxon>
        <taxon>Vertebrata</taxon>
        <taxon>Euteleostomi</taxon>
        <taxon>Amphibia</taxon>
        <taxon>Batrachia</taxon>
        <taxon>Anura</taxon>
        <taxon>Pipoidea</taxon>
        <taxon>Pipidae</taxon>
        <taxon>Xenopodinae</taxon>
        <taxon>Xenopus</taxon>
        <taxon>Silurana</taxon>
    </lineage>
</organism>
<feature type="chain" id="PRO_0000311675" description="Alpha-1,3-mannosyl-glycoprotein 4-beta-N-acetylglucosaminyltransferase A">
    <location>
        <begin position="1"/>
        <end position="536"/>
    </location>
</feature>
<feature type="chain" id="PRO_0000455174" description="Alpha-1,3-mannosyl-glycoprotein 4-beta-N-acetylglucosaminyltransferase A soluble form" evidence="1">
    <location>
        <begin position="93"/>
        <end position="535"/>
    </location>
</feature>
<feature type="topological domain" description="Cytoplasmic" evidence="5">
    <location>
        <begin position="1"/>
        <end position="6"/>
    </location>
</feature>
<feature type="transmembrane region" description="Helical; Signal-anchor for type II membrane protein" evidence="5">
    <location>
        <begin position="7"/>
        <end position="27"/>
    </location>
</feature>
<feature type="topological domain" description="Lumenal" evidence="5">
    <location>
        <begin position="28"/>
        <end position="536"/>
    </location>
</feature>
<feature type="coiled-coil region" evidence="5">
    <location>
        <begin position="28"/>
        <end position="54"/>
    </location>
</feature>
<feature type="glycosylation site" description="N-linked (GlcNAc...) asparagine" evidence="5">
    <location>
        <position position="77"/>
    </location>
</feature>
<feature type="glycosylation site" description="N-linked (GlcNAc...) asparagine" evidence="5">
    <location>
        <position position="458"/>
    </location>
</feature>